<proteinExistence type="evidence at protein level"/>
<gene>
    <name type="primary">CRYAA</name>
</gene>
<reference key="1">
    <citation type="journal article" date="1987" name="Gene">
        <title>Complete nucleotide sequence of the chicken alpha A-crystallin gene and its 5' flanking region.</title>
        <authorList>
            <person name="Thompson M.A."/>
            <person name="Hawkins J.W."/>
            <person name="Piatigorsky J."/>
        </authorList>
    </citation>
    <scope>NUCLEOTIDE SEQUENCE [GENOMIC DNA]</scope>
</reference>
<reference key="2">
    <citation type="journal article" date="1984" name="Eur. J. Biochem.">
        <title>Primary structures of the alpha-crystallin A chains of twenty-eight mammalian species, chicken and frog.</title>
        <authorList>
            <person name="de Jong W.W."/>
            <person name="Zweers A."/>
            <person name="Versteeg M."/>
            <person name="Nuy-Terwindt E.C."/>
        </authorList>
    </citation>
    <scope>PRELIMINARY PROTEIN SEQUENCE</scope>
    <scope>ACETYLATION AT MET-1</scope>
</reference>
<organism>
    <name type="scientific">Gallus gallus</name>
    <name type="common">Chicken</name>
    <dbReference type="NCBI Taxonomy" id="9031"/>
    <lineage>
        <taxon>Eukaryota</taxon>
        <taxon>Metazoa</taxon>
        <taxon>Chordata</taxon>
        <taxon>Craniata</taxon>
        <taxon>Vertebrata</taxon>
        <taxon>Euteleostomi</taxon>
        <taxon>Archelosauria</taxon>
        <taxon>Archosauria</taxon>
        <taxon>Dinosauria</taxon>
        <taxon>Saurischia</taxon>
        <taxon>Theropoda</taxon>
        <taxon>Coelurosauria</taxon>
        <taxon>Aves</taxon>
        <taxon>Neognathae</taxon>
        <taxon>Galloanserae</taxon>
        <taxon>Galliformes</taxon>
        <taxon>Phasianidae</taxon>
        <taxon>Phasianinae</taxon>
        <taxon>Gallus</taxon>
    </lineage>
</organism>
<dbReference type="EMBL" id="M17627">
    <property type="protein sequence ID" value="AAA48722.1"/>
    <property type="molecule type" value="Genomic_DNA"/>
</dbReference>
<dbReference type="PIR" id="A27309">
    <property type="entry name" value="CYCHAA"/>
</dbReference>
<dbReference type="RefSeq" id="NP_001025968.1">
    <property type="nucleotide sequence ID" value="NM_001030797.2"/>
</dbReference>
<dbReference type="SMR" id="P02504"/>
<dbReference type="FunCoup" id="P02504">
    <property type="interactions" value="100"/>
</dbReference>
<dbReference type="STRING" id="9031.ENSGALP00000054560"/>
<dbReference type="GlyCosmos" id="P02504">
    <property type="glycosylation" value="1 site, No reported glycans"/>
</dbReference>
<dbReference type="GlyGen" id="P02504">
    <property type="glycosylation" value="1 site"/>
</dbReference>
<dbReference type="iPTMnet" id="P02504"/>
<dbReference type="PaxDb" id="9031-ENSGALP00000035906"/>
<dbReference type="GeneID" id="418546"/>
<dbReference type="KEGG" id="gga:418546"/>
<dbReference type="CTD" id="1409"/>
<dbReference type="VEuPathDB" id="HostDB:geneid_418546"/>
<dbReference type="eggNOG" id="KOG3591">
    <property type="taxonomic scope" value="Eukaryota"/>
</dbReference>
<dbReference type="HOGENOM" id="CLU_095001_2_0_1"/>
<dbReference type="InParanoid" id="P02504"/>
<dbReference type="OMA" id="QQDDHGY"/>
<dbReference type="OrthoDB" id="1431247at2759"/>
<dbReference type="PhylomeDB" id="P02504"/>
<dbReference type="TreeFam" id="TF105049"/>
<dbReference type="PRO" id="PR:P02504"/>
<dbReference type="Proteomes" id="UP000000539">
    <property type="component" value="Chromosome 1"/>
</dbReference>
<dbReference type="Bgee" id="ENSGALG00000016199">
    <property type="expression patterns" value="Expressed in testis and 3 other cell types or tissues"/>
</dbReference>
<dbReference type="GO" id="GO:0005737">
    <property type="term" value="C:cytoplasm"/>
    <property type="evidence" value="ECO:0000250"/>
    <property type="project" value="AgBase"/>
</dbReference>
<dbReference type="GO" id="GO:0070062">
    <property type="term" value="C:extracellular exosome"/>
    <property type="evidence" value="ECO:0000250"/>
    <property type="project" value="AgBase"/>
</dbReference>
<dbReference type="GO" id="GO:0005634">
    <property type="term" value="C:nucleus"/>
    <property type="evidence" value="ECO:0000250"/>
    <property type="project" value="AgBase"/>
</dbReference>
<dbReference type="GO" id="GO:0042802">
    <property type="term" value="F:identical protein binding"/>
    <property type="evidence" value="ECO:0000250"/>
    <property type="project" value="AgBase"/>
</dbReference>
<dbReference type="GO" id="GO:0046872">
    <property type="term" value="F:metal ion binding"/>
    <property type="evidence" value="ECO:0007669"/>
    <property type="project" value="UniProtKB-KW"/>
</dbReference>
<dbReference type="GO" id="GO:0005212">
    <property type="term" value="F:structural constituent of eye lens"/>
    <property type="evidence" value="ECO:0007669"/>
    <property type="project" value="UniProtKB-KW"/>
</dbReference>
<dbReference type="GO" id="GO:0051082">
    <property type="term" value="F:unfolded protein binding"/>
    <property type="evidence" value="ECO:0000250"/>
    <property type="project" value="AgBase"/>
</dbReference>
<dbReference type="GO" id="GO:0002088">
    <property type="term" value="P:lens development in camera-type eye"/>
    <property type="evidence" value="ECO:0000318"/>
    <property type="project" value="GO_Central"/>
</dbReference>
<dbReference type="GO" id="GO:0043066">
    <property type="term" value="P:negative regulation of apoptotic process"/>
    <property type="evidence" value="ECO:0000250"/>
    <property type="project" value="AgBase"/>
</dbReference>
<dbReference type="GO" id="GO:0032387">
    <property type="term" value="P:negative regulation of intracellular transport"/>
    <property type="evidence" value="ECO:0000250"/>
    <property type="project" value="AgBase"/>
</dbReference>
<dbReference type="GO" id="GO:0051260">
    <property type="term" value="P:protein homooligomerization"/>
    <property type="evidence" value="ECO:0000250"/>
    <property type="project" value="AgBase"/>
</dbReference>
<dbReference type="GO" id="GO:0042026">
    <property type="term" value="P:protein refolding"/>
    <property type="evidence" value="ECO:0000318"/>
    <property type="project" value="GO_Central"/>
</dbReference>
<dbReference type="GO" id="GO:0009408">
    <property type="term" value="P:response to heat"/>
    <property type="evidence" value="ECO:0000318"/>
    <property type="project" value="GO_Central"/>
</dbReference>
<dbReference type="GO" id="GO:0007601">
    <property type="term" value="P:visual perception"/>
    <property type="evidence" value="ECO:0000250"/>
    <property type="project" value="AgBase"/>
</dbReference>
<dbReference type="CDD" id="cd06497">
    <property type="entry name" value="ACD_alphaA-crystallin_HspB4"/>
    <property type="match status" value="1"/>
</dbReference>
<dbReference type="FunFam" id="2.60.40.790:FF:000008">
    <property type="entry name" value="Alpha-crystallin A chain"/>
    <property type="match status" value="1"/>
</dbReference>
<dbReference type="Gene3D" id="2.60.40.790">
    <property type="match status" value="1"/>
</dbReference>
<dbReference type="InterPro" id="IPR002068">
    <property type="entry name" value="A-crystallin/Hsp20_dom"/>
</dbReference>
<dbReference type="InterPro" id="IPR055269">
    <property type="entry name" value="Alpha-crystallin/HSP_16"/>
</dbReference>
<dbReference type="InterPro" id="IPR001436">
    <property type="entry name" value="Alpha-crystallin/sHSP_animal"/>
</dbReference>
<dbReference type="InterPro" id="IPR003090">
    <property type="entry name" value="Alpha-crystallin_N"/>
</dbReference>
<dbReference type="InterPro" id="IPR008978">
    <property type="entry name" value="HSP20-like_chaperone"/>
</dbReference>
<dbReference type="PANTHER" id="PTHR45640:SF14">
    <property type="entry name" value="ALPHA-CRYSTALLIN A CHAIN"/>
    <property type="match status" value="1"/>
</dbReference>
<dbReference type="PANTHER" id="PTHR45640">
    <property type="entry name" value="HEAT SHOCK PROTEIN HSP-12.2-RELATED"/>
    <property type="match status" value="1"/>
</dbReference>
<dbReference type="Pfam" id="PF00525">
    <property type="entry name" value="Crystallin"/>
    <property type="match status" value="1"/>
</dbReference>
<dbReference type="Pfam" id="PF00011">
    <property type="entry name" value="HSP20"/>
    <property type="match status" value="1"/>
</dbReference>
<dbReference type="PIRSF" id="PIRSF036514">
    <property type="entry name" value="Sm_HSP_B1"/>
    <property type="match status" value="1"/>
</dbReference>
<dbReference type="PRINTS" id="PR00299">
    <property type="entry name" value="ACRYSTALLIN"/>
</dbReference>
<dbReference type="SUPFAM" id="SSF49764">
    <property type="entry name" value="HSP20-like chaperones"/>
    <property type="match status" value="1"/>
</dbReference>
<dbReference type="PROSITE" id="PS01031">
    <property type="entry name" value="SHSP"/>
    <property type="match status" value="1"/>
</dbReference>
<accession>P02504</accession>
<name>CRYAA_CHICK</name>
<sequence>MDITIQHPWFKRALGPLIPSRLFDQFFGEGLLEYDLLPLFSSTISPYYRQSLFRSVLESGISEVRSDRDKFTIMLDVKHFSPEDLSVKIIDDFVEIHGKHSERQDDHGYISREFHRRYRLPANVDQSAITCSLSSDGMLTFSGPKVPSNMDPSHSERPIPVSREEKPTSAPSS</sequence>
<evidence type="ECO:0000250" key="1"/>
<evidence type="ECO:0000250" key="2">
    <source>
        <dbReference type="UniProtKB" id="P02470"/>
    </source>
</evidence>
<evidence type="ECO:0000250" key="3">
    <source>
        <dbReference type="UniProtKB" id="P02489"/>
    </source>
</evidence>
<evidence type="ECO:0000255" key="4">
    <source>
        <dbReference type="PROSITE-ProRule" id="PRU00285"/>
    </source>
</evidence>
<evidence type="ECO:0000256" key="5">
    <source>
        <dbReference type="SAM" id="MobiDB-lite"/>
    </source>
</evidence>
<evidence type="ECO:0000269" key="6">
    <source>
    </source>
</evidence>
<comment type="function">
    <text evidence="3">Contributes to the transparency and refractive index of the lens. May act as a chaperone, preventing aggregation of various proteins under a wide range of stress conditions.</text>
</comment>
<comment type="subunit">
    <text evidence="2 3">Heteropolymer composed of three CRYAA and one CRYAB subunits (By similarity). Inter-subunit bridging via zinc ions enhances stability, which is crucial as there is no protein turn over in the lens. Can also form homodimers and homotetramers (dimers of dimers) which serve as the building blocks of homooligomers (By similarity). Within homooligomers, the zinc-binding motif is created from residues of 3 different molecules. His-100 and Glu-102 from one molecule are ligands of the zinc ion, and His-107 and His-154 residues from additional molecules complete the site with tetrahedral coordination geometry (By similarity).</text>
</comment>
<comment type="subcellular location">
    <subcellularLocation>
        <location evidence="3">Cytoplasm</location>
    </subcellularLocation>
    <subcellularLocation>
        <location evidence="3">Nucleus</location>
    </subcellularLocation>
    <text evidence="3">Translocates to the nucleus during heat shock.</text>
</comment>
<comment type="similarity">
    <text evidence="4">Belongs to the small heat shock protein (HSP20) family.</text>
</comment>
<feature type="chain" id="PRO_0000125893" description="Alpha-crystallin A chain">
    <location>
        <begin position="1"/>
        <end position="173"/>
    </location>
</feature>
<feature type="domain" description="sHSP" evidence="4">
    <location>
        <begin position="52"/>
        <end position="162"/>
    </location>
</feature>
<feature type="region of interest" description="Disordered" evidence="5">
    <location>
        <begin position="142"/>
        <end position="173"/>
    </location>
</feature>
<feature type="compositionally biased region" description="Basic and acidic residues" evidence="5">
    <location>
        <begin position="153"/>
        <end position="167"/>
    </location>
</feature>
<feature type="binding site" evidence="2">
    <location>
        <position position="100"/>
    </location>
    <ligand>
        <name>Zn(2+)</name>
        <dbReference type="ChEBI" id="CHEBI:29105"/>
        <label>1</label>
    </ligand>
</feature>
<feature type="binding site" evidence="2">
    <location>
        <position position="102"/>
    </location>
    <ligand>
        <name>Zn(2+)</name>
        <dbReference type="ChEBI" id="CHEBI:29105"/>
        <label>1</label>
    </ligand>
</feature>
<feature type="binding site" evidence="2">
    <location>
        <position position="107"/>
    </location>
    <ligand>
        <name>Zn(2+)</name>
        <dbReference type="ChEBI" id="CHEBI:29105"/>
        <label>2</label>
    </ligand>
</feature>
<feature type="binding site" evidence="2">
    <location>
        <position position="154"/>
    </location>
    <ligand>
        <name>Zn(2+)</name>
        <dbReference type="ChEBI" id="CHEBI:29105"/>
        <label>3</label>
    </ligand>
</feature>
<feature type="modified residue" description="N-acetylmethionine" evidence="6">
    <location>
        <position position="1"/>
    </location>
</feature>
<feature type="glycosylation site" description="O-linked (GlcNAc) serine" evidence="1">
    <location>
        <position position="162"/>
    </location>
</feature>
<keyword id="KW-0007">Acetylation</keyword>
<keyword id="KW-0963">Cytoplasm</keyword>
<keyword id="KW-0903">Direct protein sequencing</keyword>
<keyword id="KW-0273">Eye lens protein</keyword>
<keyword id="KW-0325">Glycoprotein</keyword>
<keyword id="KW-0479">Metal-binding</keyword>
<keyword id="KW-0539">Nucleus</keyword>
<keyword id="KW-1185">Reference proteome</keyword>
<keyword id="KW-0862">Zinc</keyword>
<protein>
    <recommendedName>
        <fullName>Alpha-crystallin A chain</fullName>
    </recommendedName>
</protein>